<name>RL5_AGARV</name>
<dbReference type="EMBL" id="CP001107">
    <property type="protein sequence ID" value="ACR74221.1"/>
    <property type="molecule type" value="Genomic_DNA"/>
</dbReference>
<dbReference type="RefSeq" id="WP_012741338.1">
    <property type="nucleotide sequence ID" value="NZ_CAXSYD010000003.1"/>
</dbReference>
<dbReference type="SMR" id="C4ZBT1"/>
<dbReference type="STRING" id="515619.EUBREC_0430"/>
<dbReference type="PaxDb" id="515619-EUBREC_0430"/>
<dbReference type="GeneID" id="86987340"/>
<dbReference type="KEGG" id="ere:EUBREC_0430"/>
<dbReference type="HOGENOM" id="CLU_061015_2_1_9"/>
<dbReference type="Proteomes" id="UP000001477">
    <property type="component" value="Chromosome"/>
</dbReference>
<dbReference type="GO" id="GO:1990904">
    <property type="term" value="C:ribonucleoprotein complex"/>
    <property type="evidence" value="ECO:0007669"/>
    <property type="project" value="UniProtKB-KW"/>
</dbReference>
<dbReference type="GO" id="GO:0005840">
    <property type="term" value="C:ribosome"/>
    <property type="evidence" value="ECO:0007669"/>
    <property type="project" value="UniProtKB-KW"/>
</dbReference>
<dbReference type="GO" id="GO:0019843">
    <property type="term" value="F:rRNA binding"/>
    <property type="evidence" value="ECO:0007669"/>
    <property type="project" value="UniProtKB-UniRule"/>
</dbReference>
<dbReference type="GO" id="GO:0003735">
    <property type="term" value="F:structural constituent of ribosome"/>
    <property type="evidence" value="ECO:0007669"/>
    <property type="project" value="InterPro"/>
</dbReference>
<dbReference type="GO" id="GO:0000049">
    <property type="term" value="F:tRNA binding"/>
    <property type="evidence" value="ECO:0007669"/>
    <property type="project" value="UniProtKB-UniRule"/>
</dbReference>
<dbReference type="GO" id="GO:0006412">
    <property type="term" value="P:translation"/>
    <property type="evidence" value="ECO:0007669"/>
    <property type="project" value="UniProtKB-UniRule"/>
</dbReference>
<dbReference type="FunFam" id="3.30.1440.10:FF:000001">
    <property type="entry name" value="50S ribosomal protein L5"/>
    <property type="match status" value="1"/>
</dbReference>
<dbReference type="Gene3D" id="3.30.1440.10">
    <property type="match status" value="1"/>
</dbReference>
<dbReference type="HAMAP" id="MF_01333_B">
    <property type="entry name" value="Ribosomal_uL5_B"/>
    <property type="match status" value="1"/>
</dbReference>
<dbReference type="InterPro" id="IPR002132">
    <property type="entry name" value="Ribosomal_uL5"/>
</dbReference>
<dbReference type="InterPro" id="IPR020930">
    <property type="entry name" value="Ribosomal_uL5_bac-type"/>
</dbReference>
<dbReference type="InterPro" id="IPR031309">
    <property type="entry name" value="Ribosomal_uL5_C"/>
</dbReference>
<dbReference type="InterPro" id="IPR020929">
    <property type="entry name" value="Ribosomal_uL5_CS"/>
</dbReference>
<dbReference type="InterPro" id="IPR022803">
    <property type="entry name" value="Ribosomal_uL5_dom_sf"/>
</dbReference>
<dbReference type="InterPro" id="IPR031310">
    <property type="entry name" value="Ribosomal_uL5_N"/>
</dbReference>
<dbReference type="NCBIfam" id="NF000585">
    <property type="entry name" value="PRK00010.1"/>
    <property type="match status" value="1"/>
</dbReference>
<dbReference type="PANTHER" id="PTHR11994">
    <property type="entry name" value="60S RIBOSOMAL PROTEIN L11-RELATED"/>
    <property type="match status" value="1"/>
</dbReference>
<dbReference type="Pfam" id="PF00281">
    <property type="entry name" value="Ribosomal_L5"/>
    <property type="match status" value="1"/>
</dbReference>
<dbReference type="Pfam" id="PF00673">
    <property type="entry name" value="Ribosomal_L5_C"/>
    <property type="match status" value="1"/>
</dbReference>
<dbReference type="PIRSF" id="PIRSF002161">
    <property type="entry name" value="Ribosomal_L5"/>
    <property type="match status" value="1"/>
</dbReference>
<dbReference type="SUPFAM" id="SSF55282">
    <property type="entry name" value="RL5-like"/>
    <property type="match status" value="1"/>
</dbReference>
<dbReference type="PROSITE" id="PS00358">
    <property type="entry name" value="RIBOSOMAL_L5"/>
    <property type="match status" value="1"/>
</dbReference>
<evidence type="ECO:0000255" key="1">
    <source>
        <dbReference type="HAMAP-Rule" id="MF_01333"/>
    </source>
</evidence>
<evidence type="ECO:0000305" key="2"/>
<proteinExistence type="inferred from homology"/>
<accession>C4ZBT1</accession>
<comment type="function">
    <text evidence="1">This is one of the proteins that bind and probably mediate the attachment of the 5S RNA into the large ribosomal subunit, where it forms part of the central protuberance. In the 70S ribosome it contacts protein S13 of the 30S subunit (bridge B1b), connecting the 2 subunits; this bridge is implicated in subunit movement. Contacts the P site tRNA; the 5S rRNA and some of its associated proteins might help stabilize positioning of ribosome-bound tRNAs.</text>
</comment>
<comment type="subunit">
    <text evidence="1">Part of the 50S ribosomal subunit; part of the 5S rRNA/L5/L18/L25 subcomplex. Contacts the 5S rRNA and the P site tRNA. Forms a bridge to the 30S subunit in the 70S ribosome.</text>
</comment>
<comment type="similarity">
    <text evidence="1">Belongs to the universal ribosomal protein uL5 family.</text>
</comment>
<protein>
    <recommendedName>
        <fullName evidence="1">Large ribosomal subunit protein uL5</fullName>
    </recommendedName>
    <alternativeName>
        <fullName evidence="2">50S ribosomal protein L5</fullName>
    </alternativeName>
</protein>
<reference key="1">
    <citation type="journal article" date="2009" name="Proc. Natl. Acad. Sci. U.S.A.">
        <title>Characterizing a model human gut microbiota composed of members of its two dominant bacterial phyla.</title>
        <authorList>
            <person name="Mahowald M.A."/>
            <person name="Rey F.E."/>
            <person name="Seedorf H."/>
            <person name="Turnbaugh P.J."/>
            <person name="Fulton R.S."/>
            <person name="Wollam A."/>
            <person name="Shah N."/>
            <person name="Wang C."/>
            <person name="Magrini V."/>
            <person name="Wilson R.K."/>
            <person name="Cantarel B.L."/>
            <person name="Coutinho P.M."/>
            <person name="Henrissat B."/>
            <person name="Crock L.W."/>
            <person name="Russell A."/>
            <person name="Verberkmoes N.C."/>
            <person name="Hettich R.L."/>
            <person name="Gordon J.I."/>
        </authorList>
    </citation>
    <scope>NUCLEOTIDE SEQUENCE [LARGE SCALE GENOMIC DNA]</scope>
    <source>
        <strain>ATCC 33656 / DSM 3377 / JCM 17463 / KCTC 5835 / LMG 30912 / VPI 0990</strain>
    </source>
</reference>
<keyword id="KW-0687">Ribonucleoprotein</keyword>
<keyword id="KW-0689">Ribosomal protein</keyword>
<keyword id="KW-0694">RNA-binding</keyword>
<keyword id="KW-0699">rRNA-binding</keyword>
<keyword id="KW-0820">tRNA-binding</keyword>
<gene>
    <name evidence="1" type="primary">rplE</name>
    <name type="ordered locus">EUBREC_0430</name>
</gene>
<organism>
    <name type="scientific">Agathobacter rectalis (strain ATCC 33656 / DSM 3377 / JCM 17463 / KCTC 5835 / VPI 0990)</name>
    <name type="common">Eubacterium rectale</name>
    <dbReference type="NCBI Taxonomy" id="515619"/>
    <lineage>
        <taxon>Bacteria</taxon>
        <taxon>Bacillati</taxon>
        <taxon>Bacillota</taxon>
        <taxon>Clostridia</taxon>
        <taxon>Lachnospirales</taxon>
        <taxon>Lachnospiraceae</taxon>
        <taxon>Agathobacter</taxon>
    </lineage>
</organism>
<sequence length="179" mass="20269">MSRLREQYENEIKDAMIKKFGYKNAMEIPKLDKIVVNMGVGEAKENAKVLEAAVKDMEAITGQKAVTTKAKNAIANFKIREGMPIGCKVTLRGEKMYEFADRLINLALPRVRDFRGVNPNAFDGRGNYALGIKEQIIFPEIEYDKVDKVRGMDIIFVTTAKTDEEARELLAQFNMPFAK</sequence>
<feature type="chain" id="PRO_1000214628" description="Large ribosomal subunit protein uL5">
    <location>
        <begin position="1"/>
        <end position="179"/>
    </location>
</feature>